<gene>
    <name type="primary">IL11</name>
</gene>
<keyword id="KW-0202">Cytokine</keyword>
<keyword id="KW-0339">Growth factor</keyword>
<keyword id="KW-1185">Reference proteome</keyword>
<keyword id="KW-0964">Secreted</keyword>
<keyword id="KW-0732">Signal</keyword>
<evidence type="ECO:0000250" key="1">
    <source>
        <dbReference type="UniProtKB" id="P20809"/>
    </source>
</evidence>
<evidence type="ECO:0000250" key="2">
    <source>
        <dbReference type="UniProtKB" id="P47873"/>
    </source>
</evidence>
<evidence type="ECO:0000255" key="3"/>
<evidence type="ECO:0000305" key="4"/>
<organism>
    <name type="scientific">Macaca fascicularis</name>
    <name type="common">Crab-eating macaque</name>
    <name type="synonym">Cynomolgus monkey</name>
    <dbReference type="NCBI Taxonomy" id="9541"/>
    <lineage>
        <taxon>Eukaryota</taxon>
        <taxon>Metazoa</taxon>
        <taxon>Chordata</taxon>
        <taxon>Craniata</taxon>
        <taxon>Vertebrata</taxon>
        <taxon>Euteleostomi</taxon>
        <taxon>Mammalia</taxon>
        <taxon>Eutheria</taxon>
        <taxon>Euarchontoglires</taxon>
        <taxon>Primates</taxon>
        <taxon>Haplorrhini</taxon>
        <taxon>Catarrhini</taxon>
        <taxon>Cercopithecidae</taxon>
        <taxon>Cercopithecinae</taxon>
        <taxon>Macaca</taxon>
    </lineage>
</organism>
<name>IL11_MACFA</name>
<comment type="function">
    <text evidence="1 2">Cytokine that stimulates the proliferation of hematopoietic stem cells and megakaryocyte progenitor cells and induces megakaryocyte maturation resulting in increased platelet production. Also promotes the proliferation of hepatocytes in response to liver damage. Binding to its receptor formed by IL6ST and IL11RA activates a signaling cascade that promotes cell proliferation. Signaling leads to the activation of intracellular protein kinases and the phosphorylation of STAT3. The interaction with the membrane-bound IL11RA and IL6ST stimulates 'classic signaling', whereas the binding of IL11 and soluble IL11RA to IL6ST stimulates 'trans-signaling'.</text>
</comment>
<comment type="subunit">
    <text evidence="1">Interacts with IL11RA to associate with IL6ST, giving rise to a multimeric signaling complex.</text>
</comment>
<comment type="subcellular location">
    <subcellularLocation>
        <location evidence="2">Secreted</location>
    </subcellularLocation>
</comment>
<comment type="similarity">
    <text evidence="4">Belongs to the IL-6 superfamily.</text>
</comment>
<protein>
    <recommendedName>
        <fullName>Interleukin-11</fullName>
        <shortName>IL-11</shortName>
    </recommendedName>
</protein>
<reference key="1">
    <citation type="journal article" date="1990" name="Proc. Natl. Acad. Sci. U.S.A.">
        <title>Molecular cloning of a cDNA encoding interleukin 11, a stromal cell-derived lymphopoietic and hematopoietic cytokine.</title>
        <authorList>
            <person name="Paul S.R."/>
            <person name="Bennett F."/>
            <person name="Calvetti J.A."/>
            <person name="Kelleher K."/>
            <person name="Wood C.R."/>
            <person name="O'Hara R.M. Jr."/>
            <person name="Leary A.C."/>
            <person name="Sibley B.S."/>
            <person name="Clark S.C."/>
            <person name="Williams D.A."/>
            <person name="Yang Y.-C."/>
        </authorList>
    </citation>
    <scope>NUCLEOTIDE SEQUENCE [MRNA]</scope>
</reference>
<feature type="signal peptide" evidence="3">
    <location>
        <begin position="1"/>
        <end position="21"/>
    </location>
</feature>
<feature type="chain" id="PRO_0000015619" description="Interleukin-11">
    <location>
        <begin position="22"/>
        <end position="199"/>
    </location>
</feature>
<feature type="region of interest" description="Important for interaction with IL11RA and for the stimulation of cell proliferation" evidence="1">
    <location>
        <begin position="182"/>
        <end position="190"/>
    </location>
</feature>
<feature type="site" description="Important for interaction with IL6ST and for the stimulation of cell proliferation" evidence="2">
    <location>
        <position position="168"/>
    </location>
</feature>
<proteinExistence type="evidence at transcript level"/>
<dbReference type="EMBL" id="M57766">
    <property type="protein sequence ID" value="AAA63281.1"/>
    <property type="molecule type" value="mRNA"/>
</dbReference>
<dbReference type="PIR" id="A38285">
    <property type="entry name" value="A38285"/>
</dbReference>
<dbReference type="RefSeq" id="XP_005595839.2">
    <property type="nucleotide sequence ID" value="XM_005595782.2"/>
</dbReference>
<dbReference type="RefSeq" id="XP_015300293.1">
    <property type="nucleotide sequence ID" value="XM_015444807.1"/>
</dbReference>
<dbReference type="RefSeq" id="XP_045236575.1">
    <property type="nucleotide sequence ID" value="XM_045380640.2"/>
</dbReference>
<dbReference type="SMR" id="P20808"/>
<dbReference type="STRING" id="9541.ENSMFAP00000013742"/>
<dbReference type="GeneID" id="102128313"/>
<dbReference type="eggNOG" id="ENOG502RZVA">
    <property type="taxonomic scope" value="Eukaryota"/>
</dbReference>
<dbReference type="Proteomes" id="UP000233100">
    <property type="component" value="Unplaced"/>
</dbReference>
<dbReference type="GO" id="GO:0005737">
    <property type="term" value="C:cytoplasm"/>
    <property type="evidence" value="ECO:0007669"/>
    <property type="project" value="TreeGrafter"/>
</dbReference>
<dbReference type="GO" id="GO:0005615">
    <property type="term" value="C:extracellular space"/>
    <property type="evidence" value="ECO:0007669"/>
    <property type="project" value="UniProtKB-KW"/>
</dbReference>
<dbReference type="GO" id="GO:0005125">
    <property type="term" value="F:cytokine activity"/>
    <property type="evidence" value="ECO:0007669"/>
    <property type="project" value="UniProtKB-KW"/>
</dbReference>
<dbReference type="GO" id="GO:0008083">
    <property type="term" value="F:growth factor activity"/>
    <property type="evidence" value="ECO:0000250"/>
    <property type="project" value="UniProtKB"/>
</dbReference>
<dbReference type="GO" id="GO:0008284">
    <property type="term" value="P:positive regulation of cell population proliferation"/>
    <property type="evidence" value="ECO:0007669"/>
    <property type="project" value="TreeGrafter"/>
</dbReference>
<dbReference type="GO" id="GO:0043410">
    <property type="term" value="P:positive regulation of MAPK cascade"/>
    <property type="evidence" value="ECO:0007669"/>
    <property type="project" value="TreeGrafter"/>
</dbReference>
<dbReference type="FunFam" id="1.20.1250.10:FF:000017">
    <property type="entry name" value="Interleukin 11"/>
    <property type="match status" value="1"/>
</dbReference>
<dbReference type="Gene3D" id="1.20.1250.10">
    <property type="match status" value="1"/>
</dbReference>
<dbReference type="InterPro" id="IPR009079">
    <property type="entry name" value="4_helix_cytokine-like_core"/>
</dbReference>
<dbReference type="InterPro" id="IPR020438">
    <property type="entry name" value="IL-11"/>
</dbReference>
<dbReference type="InterPro" id="IPR020412">
    <property type="entry name" value="IL-11_mml"/>
</dbReference>
<dbReference type="PANTHER" id="PTHR16922">
    <property type="entry name" value="INTERLEUKIN 11"/>
    <property type="match status" value="1"/>
</dbReference>
<dbReference type="PANTHER" id="PTHR16922:SF0">
    <property type="entry name" value="INTERLEUKIN-11"/>
    <property type="match status" value="1"/>
</dbReference>
<dbReference type="Pfam" id="PF07400">
    <property type="entry name" value="IL11"/>
    <property type="match status" value="1"/>
</dbReference>
<dbReference type="PRINTS" id="PR01943">
    <property type="entry name" value="INTLKN11MAML"/>
</dbReference>
<dbReference type="PRINTS" id="PR01927">
    <property type="entry name" value="INTRLEUKIN11"/>
</dbReference>
<dbReference type="SUPFAM" id="SSF47266">
    <property type="entry name" value="4-helical cytokines"/>
    <property type="match status" value="1"/>
</dbReference>
<accession>P20808</accession>
<sequence>MNCVCRLVLVVLSLWPDTAVAPGPPPGSPRASPDPRAELDSTVLLTRSLLEDTRQLTIQLKDKFPADGDHNLDSLPTLAMSAGALGALQLPSVLTRLRADLLSYLRHVQWLRRAMGSSLKTLEPELGTLQTRLDRLLRRLQLLMSRLALPQLPPDPPAPPLAPPSSTWGGIRAAHAILGGLHLTLDWAVRGLLLLKTRL</sequence>